<evidence type="ECO:0000255" key="1">
    <source>
        <dbReference type="HAMAP-Rule" id="MF_01364"/>
    </source>
</evidence>
<evidence type="ECO:0000305" key="2"/>
<keyword id="KW-0479">Metal-binding</keyword>
<keyword id="KW-1185">Reference proteome</keyword>
<keyword id="KW-0687">Ribonucleoprotein</keyword>
<keyword id="KW-0689">Ribosomal protein</keyword>
<keyword id="KW-0694">RNA-binding</keyword>
<keyword id="KW-0699">rRNA-binding</keyword>
<keyword id="KW-0862">Zinc</keyword>
<comment type="function">
    <text evidence="1">Binds 16S rRNA, required for the assembly of 30S particles and may also be responsible for determining the conformation of the 16S rRNA at the A site.</text>
</comment>
<comment type="cofactor">
    <cofactor evidence="1">
        <name>Zn(2+)</name>
        <dbReference type="ChEBI" id="CHEBI:29105"/>
    </cofactor>
    <text evidence="1">Binds 1 zinc ion per subunit.</text>
</comment>
<comment type="subunit">
    <text evidence="1">Part of the 30S ribosomal subunit. Contacts proteins S3 and S10.</text>
</comment>
<comment type="similarity">
    <text evidence="1">Belongs to the universal ribosomal protein uS14 family. Zinc-binding uS14 subfamily.</text>
</comment>
<organism>
    <name type="scientific">Thermotoga maritima (strain ATCC 43589 / DSM 3109 / JCM 10099 / NBRC 100826 / MSB8)</name>
    <dbReference type="NCBI Taxonomy" id="243274"/>
    <lineage>
        <taxon>Bacteria</taxon>
        <taxon>Thermotogati</taxon>
        <taxon>Thermotogota</taxon>
        <taxon>Thermotogae</taxon>
        <taxon>Thermotogales</taxon>
        <taxon>Thermotogaceae</taxon>
        <taxon>Thermotoga</taxon>
    </lineage>
</organism>
<dbReference type="EMBL" id="Z21677">
    <property type="protein sequence ID" value="CAA79790.1"/>
    <property type="molecule type" value="Genomic_DNA"/>
</dbReference>
<dbReference type="EMBL" id="AE000512">
    <property type="protein sequence ID" value="AAD36553.1"/>
    <property type="molecule type" value="Genomic_DNA"/>
</dbReference>
<dbReference type="PIR" id="G72248">
    <property type="entry name" value="G72248"/>
</dbReference>
<dbReference type="RefSeq" id="NP_229287.1">
    <property type="nucleotide sequence ID" value="NC_000853.1"/>
</dbReference>
<dbReference type="RefSeq" id="WP_004081809.1">
    <property type="nucleotide sequence ID" value="NC_000853.1"/>
</dbReference>
<dbReference type="SMR" id="Q9ZAE6"/>
<dbReference type="FunCoup" id="Q9ZAE6">
    <property type="interactions" value="119"/>
</dbReference>
<dbReference type="STRING" id="243274.TM_1487"/>
<dbReference type="PaxDb" id="243274-THEMA_06865"/>
<dbReference type="EnsemblBacteria" id="AAD36553">
    <property type="protein sequence ID" value="AAD36553"/>
    <property type="gene ID" value="TM_1487"/>
</dbReference>
<dbReference type="KEGG" id="tma:TM1487"/>
<dbReference type="KEGG" id="tmi:THEMA_06865"/>
<dbReference type="KEGG" id="tmm:Tmari_1495"/>
<dbReference type="KEGG" id="tmw:THMA_1519"/>
<dbReference type="eggNOG" id="COG0199">
    <property type="taxonomic scope" value="Bacteria"/>
</dbReference>
<dbReference type="InParanoid" id="Q9ZAE6"/>
<dbReference type="OrthoDB" id="9810484at2"/>
<dbReference type="Proteomes" id="UP000008183">
    <property type="component" value="Chromosome"/>
</dbReference>
<dbReference type="GO" id="GO:0005737">
    <property type="term" value="C:cytoplasm"/>
    <property type="evidence" value="ECO:0007669"/>
    <property type="project" value="UniProtKB-ARBA"/>
</dbReference>
<dbReference type="GO" id="GO:0015935">
    <property type="term" value="C:small ribosomal subunit"/>
    <property type="evidence" value="ECO:0000318"/>
    <property type="project" value="GO_Central"/>
</dbReference>
<dbReference type="GO" id="GO:0019843">
    <property type="term" value="F:rRNA binding"/>
    <property type="evidence" value="ECO:0007669"/>
    <property type="project" value="UniProtKB-UniRule"/>
</dbReference>
<dbReference type="GO" id="GO:0003735">
    <property type="term" value="F:structural constituent of ribosome"/>
    <property type="evidence" value="ECO:0000318"/>
    <property type="project" value="GO_Central"/>
</dbReference>
<dbReference type="GO" id="GO:0008270">
    <property type="term" value="F:zinc ion binding"/>
    <property type="evidence" value="ECO:0007669"/>
    <property type="project" value="UniProtKB-UniRule"/>
</dbReference>
<dbReference type="GO" id="GO:0006412">
    <property type="term" value="P:translation"/>
    <property type="evidence" value="ECO:0000318"/>
    <property type="project" value="GO_Central"/>
</dbReference>
<dbReference type="FunFam" id="4.10.830.10:FF:000001">
    <property type="entry name" value="30S ribosomal protein S14 type Z"/>
    <property type="match status" value="1"/>
</dbReference>
<dbReference type="Gene3D" id="4.10.830.10">
    <property type="entry name" value="30s Ribosomal Protein S14, Chain N"/>
    <property type="match status" value="1"/>
</dbReference>
<dbReference type="HAMAP" id="MF_01364_B">
    <property type="entry name" value="Ribosomal_uS14_2_B"/>
    <property type="match status" value="1"/>
</dbReference>
<dbReference type="InterPro" id="IPR001209">
    <property type="entry name" value="Ribosomal_uS14"/>
</dbReference>
<dbReference type="InterPro" id="IPR023053">
    <property type="entry name" value="Ribosomal_uS14_bact"/>
</dbReference>
<dbReference type="InterPro" id="IPR018271">
    <property type="entry name" value="Ribosomal_uS14_CS"/>
</dbReference>
<dbReference type="InterPro" id="IPR043140">
    <property type="entry name" value="Ribosomal_uS14_sf"/>
</dbReference>
<dbReference type="NCBIfam" id="NF005974">
    <property type="entry name" value="PRK08061.1"/>
    <property type="match status" value="1"/>
</dbReference>
<dbReference type="PANTHER" id="PTHR19836">
    <property type="entry name" value="30S RIBOSOMAL PROTEIN S14"/>
    <property type="match status" value="1"/>
</dbReference>
<dbReference type="PANTHER" id="PTHR19836:SF19">
    <property type="entry name" value="SMALL RIBOSOMAL SUBUNIT PROTEIN US14M"/>
    <property type="match status" value="1"/>
</dbReference>
<dbReference type="Pfam" id="PF00253">
    <property type="entry name" value="Ribosomal_S14"/>
    <property type="match status" value="1"/>
</dbReference>
<dbReference type="SUPFAM" id="SSF57716">
    <property type="entry name" value="Glucocorticoid receptor-like (DNA-binding domain)"/>
    <property type="match status" value="1"/>
</dbReference>
<dbReference type="PROSITE" id="PS00527">
    <property type="entry name" value="RIBOSOMAL_S14"/>
    <property type="match status" value="1"/>
</dbReference>
<proteinExistence type="inferred from homology"/>
<name>RS14Z_THEMA</name>
<feature type="chain" id="PRO_0000130953" description="Small ribosomal subunit protein uS14">
    <location>
        <begin position="1"/>
        <end position="61"/>
    </location>
</feature>
<feature type="binding site" evidence="1">
    <location>
        <position position="24"/>
    </location>
    <ligand>
        <name>Zn(2+)</name>
        <dbReference type="ChEBI" id="CHEBI:29105"/>
    </ligand>
</feature>
<feature type="binding site" evidence="1">
    <location>
        <position position="27"/>
    </location>
    <ligand>
        <name>Zn(2+)</name>
        <dbReference type="ChEBI" id="CHEBI:29105"/>
    </ligand>
</feature>
<feature type="binding site" evidence="1">
    <location>
        <position position="40"/>
    </location>
    <ligand>
        <name>Zn(2+)</name>
        <dbReference type="ChEBI" id="CHEBI:29105"/>
    </ligand>
</feature>
<feature type="binding site" evidence="1">
    <location>
        <position position="43"/>
    </location>
    <ligand>
        <name>Zn(2+)</name>
        <dbReference type="ChEBI" id="CHEBI:29105"/>
    </ligand>
</feature>
<accession>Q9ZAE6</accession>
<sequence>MAKKAMIERWKKPKKYKVREYTRCHICGRPRAVYREFGLCRICFRKLALEGKLPGVRKASW</sequence>
<protein>
    <recommendedName>
        <fullName evidence="1">Small ribosomal subunit protein uS14</fullName>
    </recommendedName>
    <alternativeName>
        <fullName evidence="2">30S ribosomal protein S14 type Z</fullName>
    </alternativeName>
</protein>
<reference key="1">
    <citation type="submission" date="1998-12" db="EMBL/GenBank/DDBJ databases">
        <authorList>
            <person name="Sanangelantoni A.M."/>
        </authorList>
    </citation>
    <scope>NUCLEOTIDE SEQUENCE [GENOMIC DNA]</scope>
    <source>
        <strain>ATCC 43589 / DSM 3109 / JCM 10099 / NBRC 100826 / MSB8</strain>
    </source>
</reference>
<reference key="2">
    <citation type="journal article" date="1999" name="Nature">
        <title>Evidence for lateral gene transfer between Archaea and Bacteria from genome sequence of Thermotoga maritima.</title>
        <authorList>
            <person name="Nelson K.E."/>
            <person name="Clayton R.A."/>
            <person name="Gill S.R."/>
            <person name="Gwinn M.L."/>
            <person name="Dodson R.J."/>
            <person name="Haft D.H."/>
            <person name="Hickey E.K."/>
            <person name="Peterson J.D."/>
            <person name="Nelson W.C."/>
            <person name="Ketchum K.A."/>
            <person name="McDonald L.A."/>
            <person name="Utterback T.R."/>
            <person name="Malek J.A."/>
            <person name="Linher K.D."/>
            <person name="Garrett M.M."/>
            <person name="Stewart A.M."/>
            <person name="Cotton M.D."/>
            <person name="Pratt M.S."/>
            <person name="Phillips C.A."/>
            <person name="Richardson D.L."/>
            <person name="Heidelberg J.F."/>
            <person name="Sutton G.G."/>
            <person name="Fleischmann R.D."/>
            <person name="Eisen J.A."/>
            <person name="White O."/>
            <person name="Salzberg S.L."/>
            <person name="Smith H.O."/>
            <person name="Venter J.C."/>
            <person name="Fraser C.M."/>
        </authorList>
    </citation>
    <scope>NUCLEOTIDE SEQUENCE [LARGE SCALE GENOMIC DNA]</scope>
    <source>
        <strain>ATCC 43589 / DSM 3109 / JCM 10099 / NBRC 100826 / MSB8</strain>
    </source>
</reference>
<gene>
    <name evidence="1" type="primary">rpsZ</name>
    <name evidence="1" type="synonym">rpsN</name>
    <name type="ordered locus">TM_1487</name>
</gene>